<proteinExistence type="inferred from homology"/>
<protein>
    <recommendedName>
        <fullName evidence="1">Phosphatidylserine decarboxylase proenzyme</fullName>
        <ecNumber evidence="1">4.1.1.65</ecNumber>
    </recommendedName>
    <component>
        <recommendedName>
            <fullName evidence="1">Phosphatidylserine decarboxylase alpha chain</fullName>
        </recommendedName>
    </component>
    <component>
        <recommendedName>
            <fullName evidence="1">Phosphatidylserine decarboxylase beta chain</fullName>
        </recommendedName>
    </component>
</protein>
<accession>B7M8S3</accession>
<feature type="chain" id="PRO_1000131364" description="Phosphatidylserine decarboxylase beta chain" evidence="1">
    <location>
        <begin position="1"/>
        <end position="253"/>
    </location>
</feature>
<feature type="chain" id="PRO_1000131365" description="Phosphatidylserine decarboxylase alpha chain" evidence="1">
    <location>
        <begin position="254"/>
        <end position="322"/>
    </location>
</feature>
<feature type="region of interest" description="Disordered" evidence="2">
    <location>
        <begin position="293"/>
        <end position="322"/>
    </location>
</feature>
<feature type="compositionally biased region" description="Basic and acidic residues" evidence="2">
    <location>
        <begin position="308"/>
        <end position="322"/>
    </location>
</feature>
<feature type="active site" description="Charge relay system; for autoendoproteolytic cleavage activity" evidence="1">
    <location>
        <position position="90"/>
    </location>
</feature>
<feature type="active site" description="Charge relay system; for autoendoproteolytic cleavage activity" evidence="1">
    <location>
        <position position="147"/>
    </location>
</feature>
<feature type="active site" description="Charge relay system; for autoendoproteolytic cleavage activity" evidence="1">
    <location>
        <position position="254"/>
    </location>
</feature>
<feature type="active site" description="Schiff-base intermediate with substrate; via pyruvic acid; for decarboxylase activity" evidence="1">
    <location>
        <position position="254"/>
    </location>
</feature>
<feature type="site" description="Cleavage (non-hydrolytic); by autocatalysis" evidence="1">
    <location>
        <begin position="253"/>
        <end position="254"/>
    </location>
</feature>
<feature type="modified residue" description="Pyruvic acid (Ser); by autocatalysis" evidence="1">
    <location>
        <position position="254"/>
    </location>
</feature>
<name>PSD_ECO8A</name>
<organism>
    <name type="scientific">Escherichia coli O8 (strain IAI1)</name>
    <dbReference type="NCBI Taxonomy" id="585034"/>
    <lineage>
        <taxon>Bacteria</taxon>
        <taxon>Pseudomonadati</taxon>
        <taxon>Pseudomonadota</taxon>
        <taxon>Gammaproteobacteria</taxon>
        <taxon>Enterobacterales</taxon>
        <taxon>Enterobacteriaceae</taxon>
        <taxon>Escherichia</taxon>
    </lineage>
</organism>
<reference key="1">
    <citation type="journal article" date="2009" name="PLoS Genet.">
        <title>Organised genome dynamics in the Escherichia coli species results in highly diverse adaptive paths.</title>
        <authorList>
            <person name="Touchon M."/>
            <person name="Hoede C."/>
            <person name="Tenaillon O."/>
            <person name="Barbe V."/>
            <person name="Baeriswyl S."/>
            <person name="Bidet P."/>
            <person name="Bingen E."/>
            <person name="Bonacorsi S."/>
            <person name="Bouchier C."/>
            <person name="Bouvet O."/>
            <person name="Calteau A."/>
            <person name="Chiapello H."/>
            <person name="Clermont O."/>
            <person name="Cruveiller S."/>
            <person name="Danchin A."/>
            <person name="Diard M."/>
            <person name="Dossat C."/>
            <person name="Karoui M.E."/>
            <person name="Frapy E."/>
            <person name="Garry L."/>
            <person name="Ghigo J.M."/>
            <person name="Gilles A.M."/>
            <person name="Johnson J."/>
            <person name="Le Bouguenec C."/>
            <person name="Lescat M."/>
            <person name="Mangenot S."/>
            <person name="Martinez-Jehanne V."/>
            <person name="Matic I."/>
            <person name="Nassif X."/>
            <person name="Oztas S."/>
            <person name="Petit M.A."/>
            <person name="Pichon C."/>
            <person name="Rouy Z."/>
            <person name="Ruf C.S."/>
            <person name="Schneider D."/>
            <person name="Tourret J."/>
            <person name="Vacherie B."/>
            <person name="Vallenet D."/>
            <person name="Medigue C."/>
            <person name="Rocha E.P.C."/>
            <person name="Denamur E."/>
        </authorList>
    </citation>
    <scope>NUCLEOTIDE SEQUENCE [LARGE SCALE GENOMIC DNA]</scope>
    <source>
        <strain>IAI1</strain>
    </source>
</reference>
<evidence type="ECO:0000255" key="1">
    <source>
        <dbReference type="HAMAP-Rule" id="MF_00662"/>
    </source>
</evidence>
<evidence type="ECO:0000256" key="2">
    <source>
        <dbReference type="SAM" id="MobiDB-lite"/>
    </source>
</evidence>
<sequence length="322" mass="35934">MLNSFKLSLQYILPKLWLTRLAGWGASKRAGWLTKLVIDLFVKYYKVDMKEAQKPDTASYRTFNEFFVRPLRDEVRPIDTDPNVLVMPADGVISQLGKIEEDKILQAKGHNYSLEALLAGNYLMADLFRNGTFVTTYLSPRDYHRVHMPCNGILREMIYVPGDLFSVNHLTAQNVPNLFARNERVICLFDTEFGPMAQILVGATIVGSIETVWAGTITPPREGIIKRWTWPAGENDGSVALLKGQEMGRFKLGSTVINLFAPGKVNLVEQLESLSVTKIGQPLAVSTETFVTPDAEPAPLPAEEIEAEHDASPLVDDKKDQV</sequence>
<gene>
    <name evidence="1" type="primary">psd</name>
    <name type="ordered locus">ECIAI1_4395</name>
</gene>
<keyword id="KW-1003">Cell membrane</keyword>
<keyword id="KW-0210">Decarboxylase</keyword>
<keyword id="KW-0444">Lipid biosynthesis</keyword>
<keyword id="KW-0443">Lipid metabolism</keyword>
<keyword id="KW-0456">Lyase</keyword>
<keyword id="KW-0472">Membrane</keyword>
<keyword id="KW-0594">Phospholipid biosynthesis</keyword>
<keyword id="KW-1208">Phospholipid metabolism</keyword>
<keyword id="KW-0670">Pyruvate</keyword>
<keyword id="KW-0865">Zymogen</keyword>
<comment type="function">
    <text evidence="1">Catalyzes the formation of phosphatidylethanolamine (PtdEtn) from phosphatidylserine (PtdSer).</text>
</comment>
<comment type="catalytic activity">
    <reaction evidence="1">
        <text>a 1,2-diacyl-sn-glycero-3-phospho-L-serine + H(+) = a 1,2-diacyl-sn-glycero-3-phosphoethanolamine + CO2</text>
        <dbReference type="Rhea" id="RHEA:20828"/>
        <dbReference type="ChEBI" id="CHEBI:15378"/>
        <dbReference type="ChEBI" id="CHEBI:16526"/>
        <dbReference type="ChEBI" id="CHEBI:57262"/>
        <dbReference type="ChEBI" id="CHEBI:64612"/>
        <dbReference type="EC" id="4.1.1.65"/>
    </reaction>
</comment>
<comment type="cofactor">
    <cofactor evidence="1">
        <name>pyruvate</name>
        <dbReference type="ChEBI" id="CHEBI:15361"/>
    </cofactor>
    <text evidence="1">Binds 1 pyruvoyl group covalently per subunit.</text>
</comment>
<comment type="pathway">
    <text evidence="1">Phospholipid metabolism; phosphatidylethanolamine biosynthesis; phosphatidylethanolamine from CDP-diacylglycerol: step 2/2.</text>
</comment>
<comment type="subunit">
    <text evidence="1">Heterodimer of a large membrane-associated beta subunit and a small pyruvoyl-containing alpha subunit.</text>
</comment>
<comment type="subcellular location">
    <subcellularLocation>
        <location evidence="1">Cell membrane</location>
        <topology evidence="1">Peripheral membrane protein</topology>
    </subcellularLocation>
</comment>
<comment type="PTM">
    <text evidence="1">Is synthesized initially as an inactive proenzyme. Formation of the active enzyme involves a self-maturation process in which the active site pyruvoyl group is generated from an internal serine residue via an autocatalytic post-translational modification. Two non-identical subunits are generated from the proenzyme in this reaction, and the pyruvate is formed at the N-terminus of the alpha chain, which is derived from the carboxyl end of the proenzyme. The autoendoproteolytic cleavage occurs by a canonical serine protease mechanism, in which the side chain hydroxyl group of the serine supplies its oxygen atom to form the C-terminus of the beta chain, while the remainder of the serine residue undergoes an oxidative deamination to produce ammonia and the pyruvoyl prosthetic group on the alpha chain. During this reaction, the Ser that is part of the protease active site of the proenzyme becomes the pyruvoyl prosthetic group, which constitutes an essential element of the active site of the mature decarboxylase.</text>
</comment>
<comment type="similarity">
    <text evidence="1">Belongs to the phosphatidylserine decarboxylase family. PSD-B subfamily. Prokaryotic type I sub-subfamily.</text>
</comment>
<dbReference type="EC" id="4.1.1.65" evidence="1"/>
<dbReference type="EMBL" id="CU928160">
    <property type="protein sequence ID" value="CAR01138.1"/>
    <property type="molecule type" value="Genomic_DNA"/>
</dbReference>
<dbReference type="SMR" id="B7M8S3"/>
<dbReference type="KEGG" id="ecr:ECIAI1_4395"/>
<dbReference type="HOGENOM" id="CLU_029061_4_1_6"/>
<dbReference type="UniPathway" id="UPA00558">
    <property type="reaction ID" value="UER00616"/>
</dbReference>
<dbReference type="GO" id="GO:0005886">
    <property type="term" value="C:plasma membrane"/>
    <property type="evidence" value="ECO:0007669"/>
    <property type="project" value="UniProtKB-SubCell"/>
</dbReference>
<dbReference type="GO" id="GO:0004609">
    <property type="term" value="F:phosphatidylserine decarboxylase activity"/>
    <property type="evidence" value="ECO:0007669"/>
    <property type="project" value="UniProtKB-UniRule"/>
</dbReference>
<dbReference type="GO" id="GO:0006646">
    <property type="term" value="P:phosphatidylethanolamine biosynthetic process"/>
    <property type="evidence" value="ECO:0007669"/>
    <property type="project" value="UniProtKB-UniRule"/>
</dbReference>
<dbReference type="HAMAP" id="MF_00662">
    <property type="entry name" value="PS_decarb_PSD_B_type1"/>
    <property type="match status" value="1"/>
</dbReference>
<dbReference type="InterPro" id="IPR003817">
    <property type="entry name" value="PS_Dcarbxylase"/>
</dbReference>
<dbReference type="InterPro" id="IPR033177">
    <property type="entry name" value="PSD-B"/>
</dbReference>
<dbReference type="InterPro" id="IPR033178">
    <property type="entry name" value="PSD_type1_pro"/>
</dbReference>
<dbReference type="NCBIfam" id="TIGR00163">
    <property type="entry name" value="PS_decarb"/>
    <property type="match status" value="1"/>
</dbReference>
<dbReference type="PANTHER" id="PTHR10067">
    <property type="entry name" value="PHOSPHATIDYLSERINE DECARBOXYLASE"/>
    <property type="match status" value="1"/>
</dbReference>
<dbReference type="PANTHER" id="PTHR10067:SF6">
    <property type="entry name" value="PHOSPHATIDYLSERINE DECARBOXYLASE PROENZYME, MITOCHONDRIAL"/>
    <property type="match status" value="1"/>
</dbReference>
<dbReference type="Pfam" id="PF02666">
    <property type="entry name" value="PS_Dcarbxylase"/>
    <property type="match status" value="1"/>
</dbReference>